<sequence length="1351" mass="150800">MFLIIFILPTTLAVIGDFNCTNSFINDYNKTIPRISEDVVDVSLGLGTYYVLNRVYLNTTLLFTGYFPKSGANFRDLALKGSKYLSTLWYKPPFLSDFNNGIFSKVKNTKLYVNNTLYSEFSTIVIGSVFVNTSYTIVVQPHNGILEITACQYTMCEYPHTVCKSKGSIRNESWHIDSSEPLCLFKKNFTYNVSADWLYFHFYQERGVFYAYYADVGMPTTFLFSLYLGTILSHYYVMPLTCKAISSNTDNETLEYWVTPLSRRQYLLNFDEHGVITNAVDCSSSFLSEIQCKTQSFAPNTGVYDLSGFTVKPVATVYRRIPNLPDCDIDNWLNNVSVPSPLNWERRIFSNCNFNLSTLLRLVHVDSFSCNNLDKSKIFGSCFNSITVDKFAIPNRRRDDLQLGSSGFLQSSNYKIDISSSSCQLYYSLPLVNVTINNFNPSSWNRRYGFGSFNVSSYDVVYSDHCFSVNSDFCPCADPSVVNSCVKSKPLSAICPAGTKYRHCDLDTTLYVNNWCRCSCLPDPISTYSPNTCPQKKVVVGIGEHCPGLGINEEKCGTQLNHSSCSCSPDAFLGWSFDSCISNNRCNIFSNFIFNGINSGTTCSNDLLYSNTEVSTGVCVNYDLYGITGQGIFKEVSAAYYNNWQNLLYDSNGNIIGFKDFLTNKTYTILPCYSGRVSAAFYQNSSSPALLYRNLKCSYVLNNISFISQPFYFDSYLGCVLNAVNLTSYSVSSCDLRMGSGFCIDYALPSSRRKRRGISSPYRFVTFEPFNVSFVNDSVETVGGLFEIQIPTNFTIAGHEEFIQTSSPKVTIDCSAFVCSNYAACHDLLSEYGTFCDNINSILNEVNDLLDITQLQVANALMQGVTLSSNLNTNLHSDVDNIDFKSLLGCLGSQCGSSSRSLLEDLLFNKVKLSDVGFVEAYNNCTGGSEIRDLLCVQSFNGIKVLPPILSETQISGYTTAATVAAMFPPWSAAAGVPFSLNVQYRINGLGVTMDVLNKNQKLIANAFNKALLSIQNGFTATNSALAKIQSVVNANAQALNSLLQQLFNKFGAISSSLQEILSRLDNLEAQVQIDRLINGRLTALNAYVSQQLSDITLIKAGASRAIEKVNECVKSQSPRINFCGNGNHILSLVQNAPYGLLFIHFSYKPTSFKTVLVSPGLCLSGDRGIAPKQGYFIKQNDSWMFTGSSYYYPEPISDKNVVFMNSCSVNFTKAPFIYLNNSIPNLSDFEAEFSLWFKNHTSIAPNLTFNSHINATFLDLYYEMNVIQESIKSLNSSFINLKEIGTYEMYVKWPWYIWLLIVILFIIFLMILFFICCCTGCGSACFSKCHNCCDEYGGHNDFVIKASHDD</sequence>
<accession>Q14EB0</accession>
<gene>
    <name evidence="2" type="primary">S</name>
    <name type="ORF">3</name>
</gene>
<comment type="function">
    <molecule>Spike protein S1</molecule>
    <text evidence="2">Attaches the virion to the cell membrane by interacting with host receptor, initiating the infection.</text>
</comment>
<comment type="function">
    <molecule>Spike protein S2</molecule>
    <text evidence="2">Mediates fusion of the virion and cellular membranes by acting as a class I viral fusion protein. Under the current model, the protein has at least three conformational states: pre-fusion native state, pre-hairpin intermediate state, and post-fusion hairpin state. During viral and target cell membrane fusion, the coiled coil regions (heptad repeats) assume a trimer-of-hairpins structure, positioning the fusion peptide in close proximity to the C-terminal region of the ectodomain. The formation of this structure appears to drive apposition and subsequent fusion of viral and target cell membranes.</text>
</comment>
<comment type="function">
    <molecule>Spike protein S2'</molecule>
    <text evidence="2">Acts as a viral fusion peptide which is unmasked following S2 cleavage occurring upon virus endocytosis.</text>
</comment>
<comment type="subunit">
    <text evidence="2">Homotrimer; each monomer consists of a S1 and a S2 subunit. The resulting peplomers protrude from the virus surface as spikes.</text>
</comment>
<comment type="subcellular location">
    <subcellularLocation>
        <location evidence="2">Virion membrane</location>
        <topology evidence="2">Single-pass type I membrane protein</topology>
    </subcellularLocation>
    <subcellularLocation>
        <location evidence="2">Host endoplasmic reticulum-Golgi intermediate compartment membrane</location>
        <topology evidence="2">Single-pass type I membrane protein</topology>
    </subcellularLocation>
    <subcellularLocation>
        <location evidence="2">Host cell membrane</location>
        <topology evidence="2">Single-pass type I membrane protein</topology>
    </subcellularLocation>
    <text evidence="2">Accumulates in the endoplasmic reticulum-Golgi intermediate compartment, where it participates in virus particle assembly. Some S oligomers are transported to the host plasma membrane, where they may mediate cell-cell fusion.</text>
</comment>
<comment type="domain">
    <text evidence="2">Fusion peptide 1 (FP1) and fusion peptide 2 (FP2) function cooperatively and have a membrane-ordering effect on lipid headgroups and shallow hydrophobic regions of target bilayers. They are considered as two domains of an extended, bipartite FP. The membrane-ordering activity is calcium-dependent and also dependent on correct folding, which is maintained by an internal disulfide bond in FP2.</text>
</comment>
<comment type="PTM">
    <text evidence="2">Specific enzymatic cleavages in vivo yield mature proteins. The precursor is processed into S1 and S2 by host cell furin or another cellular protease to yield the mature S1 and S2 proteins. Additionally, a second cleavage leads to the release of a fusion peptide after viral attachment to host cell receptor.</text>
</comment>
<comment type="PTM">
    <text evidence="2">The cytoplasmic Cys-rich domain is palmitoylated. Spike glycoprotein is digested within host endosomes.</text>
</comment>
<comment type="miscellaneous">
    <text>Isolate N2 belongs to genotype B.</text>
</comment>
<comment type="similarity">
    <text evidence="2">Belongs to the betacoronaviruses spike protein family.</text>
</comment>
<proteinExistence type="evidence at protein level"/>
<dbReference type="EMBL" id="AY884001">
    <property type="protein sequence ID" value="AAX76521.1"/>
    <property type="molecule type" value="Genomic_RNA"/>
</dbReference>
<dbReference type="PDB" id="8Y19">
    <property type="method" value="EM"/>
    <property type="resolution" value="2.30 A"/>
    <property type="chains" value="A/B/C=1-1290"/>
</dbReference>
<dbReference type="PDB" id="8Y1A">
    <property type="method" value="EM"/>
    <property type="resolution" value="2.80 A"/>
    <property type="chains" value="A/B/C=1-1290"/>
</dbReference>
<dbReference type="PDB" id="8Y1B">
    <property type="method" value="EM"/>
    <property type="resolution" value="2.80 A"/>
    <property type="chains" value="A/B/C=1-1290"/>
</dbReference>
<dbReference type="PDB" id="8Y1C">
    <property type="method" value="EM"/>
    <property type="resolution" value="2.80 A"/>
    <property type="chains" value="A/B/C=1-1290"/>
</dbReference>
<dbReference type="PDB" id="8Y1D">
    <property type="method" value="EM"/>
    <property type="resolution" value="2.70 A"/>
    <property type="chains" value="A/B/C=1-1290"/>
</dbReference>
<dbReference type="PDB" id="8Y1E">
    <property type="method" value="EM"/>
    <property type="resolution" value="2.70 A"/>
    <property type="chains" value="A/B/C=1-1290"/>
</dbReference>
<dbReference type="PDB" id="8Y1F">
    <property type="method" value="EM"/>
    <property type="resolution" value="2.80 A"/>
    <property type="chains" value="A/B/C=1-1290"/>
</dbReference>
<dbReference type="PDB" id="8Y1G">
    <property type="method" value="EM"/>
    <property type="resolution" value="2.99 A"/>
    <property type="chains" value="A/B/C=1-1290"/>
</dbReference>
<dbReference type="PDB" id="8Y1H">
    <property type="method" value="EM"/>
    <property type="resolution" value="3.16 A"/>
    <property type="chains" value="A/B/C=1-1290"/>
</dbReference>
<dbReference type="PDBsum" id="8Y19"/>
<dbReference type="PDBsum" id="8Y1A"/>
<dbReference type="PDBsum" id="8Y1B"/>
<dbReference type="PDBsum" id="8Y1C"/>
<dbReference type="PDBsum" id="8Y1D"/>
<dbReference type="PDBsum" id="8Y1E"/>
<dbReference type="PDBsum" id="8Y1F"/>
<dbReference type="PDBsum" id="8Y1G"/>
<dbReference type="PDBsum" id="8Y1H"/>
<dbReference type="EMDB" id="EMD-38828"/>
<dbReference type="EMDB" id="EMD-38829"/>
<dbReference type="EMDB" id="EMD-38830"/>
<dbReference type="EMDB" id="EMD-38831"/>
<dbReference type="EMDB" id="EMD-38832"/>
<dbReference type="EMDB" id="EMD-38833"/>
<dbReference type="EMDB" id="EMD-38834"/>
<dbReference type="EMDB" id="EMD-38835"/>
<dbReference type="EMDB" id="EMD-38836"/>
<dbReference type="SMR" id="Q14EB0"/>
<dbReference type="GlyCosmos" id="Q14EB0">
    <property type="glycosylation" value="30 sites, No reported glycans"/>
</dbReference>
<dbReference type="Proteomes" id="UP000006551">
    <property type="component" value="Genome"/>
</dbReference>
<dbReference type="GO" id="GO:0044173">
    <property type="term" value="C:host cell endoplasmic reticulum-Golgi intermediate compartment membrane"/>
    <property type="evidence" value="ECO:0007669"/>
    <property type="project" value="UniProtKB-SubCell"/>
</dbReference>
<dbReference type="GO" id="GO:0020002">
    <property type="term" value="C:host cell plasma membrane"/>
    <property type="evidence" value="ECO:0007669"/>
    <property type="project" value="UniProtKB-SubCell"/>
</dbReference>
<dbReference type="GO" id="GO:0016020">
    <property type="term" value="C:membrane"/>
    <property type="evidence" value="ECO:0007669"/>
    <property type="project" value="UniProtKB-UniRule"/>
</dbReference>
<dbReference type="GO" id="GO:0019031">
    <property type="term" value="C:viral envelope"/>
    <property type="evidence" value="ECO:0007669"/>
    <property type="project" value="UniProtKB-UniRule"/>
</dbReference>
<dbReference type="GO" id="GO:0055036">
    <property type="term" value="C:virion membrane"/>
    <property type="evidence" value="ECO:0007669"/>
    <property type="project" value="UniProtKB-SubCell"/>
</dbReference>
<dbReference type="GO" id="GO:0075509">
    <property type="term" value="P:endocytosis involved in viral entry into host cell"/>
    <property type="evidence" value="ECO:0007669"/>
    <property type="project" value="UniProtKB-UniRule"/>
</dbReference>
<dbReference type="GO" id="GO:0039654">
    <property type="term" value="P:fusion of virus membrane with host endosome membrane"/>
    <property type="evidence" value="ECO:0007669"/>
    <property type="project" value="UniProtKB-UniRule"/>
</dbReference>
<dbReference type="GO" id="GO:0019064">
    <property type="term" value="P:fusion of virus membrane with host plasma membrane"/>
    <property type="evidence" value="ECO:0007669"/>
    <property type="project" value="UniProtKB-UniRule"/>
</dbReference>
<dbReference type="GO" id="GO:0046813">
    <property type="term" value="P:receptor-mediated virion attachment to host cell"/>
    <property type="evidence" value="ECO:0007669"/>
    <property type="project" value="UniProtKB-UniRule"/>
</dbReference>
<dbReference type="CDD" id="cd22380">
    <property type="entry name" value="HKU1-CoV-like_Spike_SD1-2_S1-S2_S2"/>
    <property type="match status" value="1"/>
</dbReference>
<dbReference type="CDD" id="cd21482">
    <property type="entry name" value="HKU1_N5-like_CoV_Spike_S1_RBD"/>
    <property type="match status" value="1"/>
</dbReference>
<dbReference type="CDD" id="cd21625">
    <property type="entry name" value="MHV-like_Spike_S1_NTD"/>
    <property type="match status" value="1"/>
</dbReference>
<dbReference type="FunFam" id="1.20.5.300:FF:000003">
    <property type="entry name" value="Spike glycoprotein"/>
    <property type="match status" value="1"/>
</dbReference>
<dbReference type="FunFam" id="2.60.120.960:FF:000002">
    <property type="entry name" value="Spike glycoprotein"/>
    <property type="match status" value="1"/>
</dbReference>
<dbReference type="Gene3D" id="1.20.5.300">
    <property type="match status" value="2"/>
</dbReference>
<dbReference type="Gene3D" id="3.30.70.1840">
    <property type="match status" value="1"/>
</dbReference>
<dbReference type="Gene3D" id="2.60.120.960">
    <property type="entry name" value="Spike glycoprotein, N-terminal domain"/>
    <property type="match status" value="1"/>
</dbReference>
<dbReference type="HAMAP" id="MF_04099">
    <property type="entry name" value="BETA_CORONA_SPIKE"/>
    <property type="match status" value="1"/>
</dbReference>
<dbReference type="InterPro" id="IPR032500">
    <property type="entry name" value="bCoV_S1_N"/>
</dbReference>
<dbReference type="InterPro" id="IPR042578">
    <property type="entry name" value="BETA_CORONA_SPIKE"/>
</dbReference>
<dbReference type="InterPro" id="IPR043607">
    <property type="entry name" value="CoV_S1_C"/>
</dbReference>
<dbReference type="InterPro" id="IPR043473">
    <property type="entry name" value="S2_sf_CoV"/>
</dbReference>
<dbReference type="InterPro" id="IPR043002">
    <property type="entry name" value="Spike_N_sf"/>
</dbReference>
<dbReference type="InterPro" id="IPR044339">
    <property type="entry name" value="Spike_S1_NTD_MHV-like"/>
</dbReference>
<dbReference type="InterPro" id="IPR018548">
    <property type="entry name" value="Spike_S1_RBD_bCoV"/>
</dbReference>
<dbReference type="InterPro" id="IPR044375">
    <property type="entry name" value="Spike_S1_RBD_CoV_HKU1-like"/>
</dbReference>
<dbReference type="InterPro" id="IPR036326">
    <property type="entry name" value="Spike_S1_RBD_sf_bCoV"/>
</dbReference>
<dbReference type="InterPro" id="IPR002552">
    <property type="entry name" value="Spike_S2_CoV"/>
</dbReference>
<dbReference type="InterPro" id="IPR043614">
    <property type="entry name" value="Spike_S2_CoV_C"/>
</dbReference>
<dbReference type="InterPro" id="IPR044873">
    <property type="entry name" value="Spike_S2_CoV_HR1"/>
</dbReference>
<dbReference type="InterPro" id="IPR044874">
    <property type="entry name" value="Spike_S2_CoV_HR2"/>
</dbReference>
<dbReference type="Pfam" id="PF16451">
    <property type="entry name" value="bCoV_S1_N"/>
    <property type="match status" value="1"/>
</dbReference>
<dbReference type="Pfam" id="PF09408">
    <property type="entry name" value="bCoV_S1_RBD"/>
    <property type="match status" value="1"/>
</dbReference>
<dbReference type="Pfam" id="PF19209">
    <property type="entry name" value="CoV_S1_C"/>
    <property type="match status" value="1"/>
</dbReference>
<dbReference type="Pfam" id="PF01601">
    <property type="entry name" value="CoV_S2"/>
    <property type="match status" value="1"/>
</dbReference>
<dbReference type="Pfam" id="PF19214">
    <property type="entry name" value="CoV_S2_C"/>
    <property type="match status" value="1"/>
</dbReference>
<dbReference type="SUPFAM" id="SSF111474">
    <property type="entry name" value="Coronavirus S2 glycoprotein"/>
    <property type="match status" value="2"/>
</dbReference>
<dbReference type="SUPFAM" id="SSF143587">
    <property type="entry name" value="SARS receptor-binding domain-like"/>
    <property type="match status" value="1"/>
</dbReference>
<dbReference type="PROSITE" id="PS51921">
    <property type="entry name" value="BCOV_S1_CTD"/>
    <property type="match status" value="1"/>
</dbReference>
<dbReference type="PROSITE" id="PS51922">
    <property type="entry name" value="BCOV_S1_NTD"/>
    <property type="match status" value="1"/>
</dbReference>
<dbReference type="PROSITE" id="PS51923">
    <property type="entry name" value="COV_S2_HR1"/>
    <property type="match status" value="1"/>
</dbReference>
<dbReference type="PROSITE" id="PS51924">
    <property type="entry name" value="COV_S2_HR2"/>
    <property type="match status" value="1"/>
</dbReference>
<organism>
    <name type="scientific">Human coronavirus HKU1 (isolate N2)</name>
    <name type="common">HCoV-HKU1</name>
    <dbReference type="NCBI Taxonomy" id="443240"/>
    <lineage>
        <taxon>Viruses</taxon>
        <taxon>Riboviria</taxon>
        <taxon>Orthornavirae</taxon>
        <taxon>Pisuviricota</taxon>
        <taxon>Pisoniviricetes</taxon>
        <taxon>Nidovirales</taxon>
        <taxon>Cornidovirineae</taxon>
        <taxon>Coronaviridae</taxon>
        <taxon>Orthocoronavirinae</taxon>
        <taxon>Betacoronavirus</taxon>
        <taxon>Embecovirus</taxon>
        <taxon>Human coronavirus HKU1</taxon>
    </lineage>
</organism>
<name>SPIKE_CVHN2</name>
<reference key="1">
    <citation type="journal article" date="2006" name="J. Virol.">
        <title>Comparative analysis of 22 coronavirus HKU1 genomes reveals a novel genotype and evidence of natural recombination in coronavirus HKU1.</title>
        <authorList>
            <person name="Woo P.C.Y."/>
            <person name="Lau S.K.P."/>
            <person name="Yip C.C.Y."/>
            <person name="Huang Y."/>
            <person name="Tsoi H.-W."/>
            <person name="Chan K.-H."/>
            <person name="Yuen K.-Y."/>
        </authorList>
    </citation>
    <scope>NUCLEOTIDE SEQUENCE [GENOMIC RNA]</scope>
</reference>
<feature type="signal peptide" evidence="2">
    <location>
        <begin position="1"/>
        <end position="12"/>
    </location>
</feature>
<feature type="chain" id="PRO_0000297806" description="Spike glycoprotein">
    <location>
        <begin position="13"/>
        <end position="1351"/>
    </location>
</feature>
<feature type="chain" id="PRO_0000297807" description="Spike protein S1">
    <location>
        <begin position="13"/>
        <end position="756"/>
    </location>
</feature>
<feature type="chain" id="PRO_0000297808" description="Spike protein S2">
    <location>
        <begin position="757"/>
        <end position="1351"/>
    </location>
</feature>
<feature type="chain" id="PRO_0000444079" description="Spike protein S2'" evidence="2">
    <location>
        <begin position="901"/>
        <end position="1351"/>
    </location>
</feature>
<feature type="topological domain" description="Extracellular" evidence="2">
    <location>
        <begin position="13"/>
        <end position="1295"/>
    </location>
</feature>
<feature type="transmembrane region" description="Helical" evidence="2">
    <location>
        <begin position="1296"/>
        <end position="1316"/>
    </location>
</feature>
<feature type="topological domain" description="Cytoplasmic" evidence="2">
    <location>
        <begin position="1317"/>
        <end position="1351"/>
    </location>
</feature>
<feature type="domain" description="BetaCoV S1-NTD" evidence="4">
    <location>
        <begin position="14"/>
        <end position="294"/>
    </location>
</feature>
<feature type="domain" description="BetaCoV S1-CTD" evidence="3">
    <location>
        <begin position="325"/>
        <end position="605"/>
    </location>
</feature>
<feature type="region of interest" description="Fusion peptide 1" evidence="2">
    <location>
        <begin position="901"/>
        <end position="922"/>
    </location>
</feature>
<feature type="region of interest" description="Fusion peptide 2" evidence="2">
    <location>
        <begin position="920"/>
        <end position="940"/>
    </location>
</feature>
<feature type="region of interest" description="Heptad repeat 1" evidence="2">
    <location>
        <begin position="1001"/>
        <end position="1051"/>
    </location>
</feature>
<feature type="region of interest" description="Heptad repeat 2" evidence="2">
    <location>
        <begin position="1245"/>
        <end position="1284"/>
    </location>
</feature>
<feature type="coiled-coil region" evidence="2">
    <location>
        <begin position="1030"/>
        <end position="1074"/>
    </location>
</feature>
<feature type="coiled-coil region" evidence="2">
    <location>
        <begin position="1257"/>
        <end position="1285"/>
    </location>
</feature>
<feature type="short sequence motif" description="KxHxx" evidence="2">
    <location>
        <begin position="1347"/>
        <end position="1351"/>
    </location>
</feature>
<feature type="site" description="Cleavage; by host" evidence="1">
    <location>
        <begin position="756"/>
        <end position="757"/>
    </location>
</feature>
<feature type="site" description="Cleavage" evidence="2">
    <location>
        <begin position="900"/>
        <end position="901"/>
    </location>
</feature>
<feature type="glycosylation site" description="N-linked (GlcNAc...) asparagine; by host" evidence="2">
    <location>
        <position position="19"/>
    </location>
</feature>
<feature type="glycosylation site" description="N-linked (GlcNAc...) asparagine; by host" evidence="2">
    <location>
        <position position="29"/>
    </location>
</feature>
<feature type="glycosylation site" description="N-linked (GlcNAc...) asparagine; by host" evidence="2">
    <location>
        <position position="58"/>
    </location>
</feature>
<feature type="glycosylation site" description="N-linked (GlcNAc...) asparagine; by host" evidence="2">
    <location>
        <position position="114"/>
    </location>
</feature>
<feature type="glycosylation site" description="N-linked (GlcNAc...) asparagine; by host" evidence="2">
    <location>
        <position position="132"/>
    </location>
</feature>
<feature type="glycosylation site" description="N-linked (GlcNAc...) asparagine; by host" evidence="2">
    <location>
        <position position="171"/>
    </location>
</feature>
<feature type="glycosylation site" description="N-linked (GlcNAc...) asparagine; by host" evidence="2">
    <location>
        <position position="188"/>
    </location>
</feature>
<feature type="glycosylation site" description="N-linked (GlcNAc...) asparagine; by host" evidence="2">
    <location>
        <position position="192"/>
    </location>
</feature>
<feature type="glycosylation site" description="N-linked (GlcNAc...) asparagine; by host" evidence="2">
    <location>
        <position position="251"/>
    </location>
</feature>
<feature type="glycosylation site" description="N-linked (GlcNAc...) asparagine; by host" evidence="2">
    <location>
        <position position="335"/>
    </location>
</feature>
<feature type="glycosylation site" description="N-linked (GlcNAc...) asparagine; by host" evidence="2">
    <location>
        <position position="355"/>
    </location>
</feature>
<feature type="glycosylation site" description="N-linked (GlcNAc...) asparagine; by host" evidence="2">
    <location>
        <position position="433"/>
    </location>
</feature>
<feature type="glycosylation site" description="N-linked (GlcNAc...) asparagine; by host" evidence="2">
    <location>
        <position position="454"/>
    </location>
</feature>
<feature type="glycosylation site" description="N-linked (GlcNAc...) asparagine; by host" evidence="2">
    <location>
        <position position="561"/>
    </location>
</feature>
<feature type="glycosylation site" description="N-linked (GlcNAc...) asparagine; by host" evidence="2">
    <location>
        <position position="664"/>
    </location>
</feature>
<feature type="glycosylation site" description="N-linked (GlcNAc...) asparagine; by host" evidence="2">
    <location>
        <position position="684"/>
    </location>
</feature>
<feature type="glycosylation site" description="N-linked (GlcNAc...) asparagine; by host" evidence="2">
    <location>
        <position position="703"/>
    </location>
</feature>
<feature type="glycosylation site" description="N-linked (GlcNAc...) asparagine; by host" evidence="2">
    <location>
        <position position="725"/>
    </location>
</feature>
<feature type="glycosylation site" description="N-linked (GlcNAc...) asparagine; by host" evidence="2">
    <location>
        <position position="771"/>
    </location>
</feature>
<feature type="glycosylation site" description="N-linked (GlcNAc...) asparagine; by host" evidence="2">
    <location>
        <position position="776"/>
    </location>
</feature>
<feature type="glycosylation site" description="N-linked (GlcNAc...) asparagine; by host" evidence="2">
    <location>
        <position position="793"/>
    </location>
</feature>
<feature type="glycosylation site" description="N-linked (GlcNAc...) asparagine; by host" evidence="2">
    <location>
        <position position="924"/>
    </location>
</feature>
<feature type="glycosylation site" description="N-linked (GlcNAc...) asparagine; by host" evidence="2">
    <location>
        <position position="1181"/>
    </location>
</feature>
<feature type="glycosylation site" description="N-linked (GlcNAc...) asparagine; by host" evidence="2">
    <location>
        <position position="1211"/>
    </location>
</feature>
<feature type="glycosylation site" description="N-linked (GlcNAc...) asparagine; by host" evidence="2">
    <location>
        <position position="1221"/>
    </location>
</feature>
<feature type="glycosylation site" description="N-linked (GlcNAc...) asparagine; by host" evidence="2">
    <location>
        <position position="1226"/>
    </location>
</feature>
<feature type="glycosylation site" description="N-linked (GlcNAc...) asparagine; by host" evidence="2">
    <location>
        <position position="1240"/>
    </location>
</feature>
<feature type="glycosylation site" description="N-linked (GlcNAc...) asparagine; by host" evidence="2">
    <location>
        <position position="1247"/>
    </location>
</feature>
<feature type="glycosylation site" description="N-linked (GlcNAc...) asparagine; by host" evidence="2">
    <location>
        <position position="1255"/>
    </location>
</feature>
<feature type="glycosylation site" description="N-linked (GlcNAc...) asparagine; by host" evidence="2">
    <location>
        <position position="1276"/>
    </location>
</feature>
<feature type="disulfide bond" evidence="4">
    <location>
        <begin position="20"/>
        <end position="156"/>
    </location>
</feature>
<feature type="disulfide bond" evidence="4">
    <location>
        <begin position="151"/>
        <end position="183"/>
    </location>
</feature>
<feature type="disulfide bond" evidence="4">
    <location>
        <begin position="163"/>
        <end position="242"/>
    </location>
</feature>
<feature type="disulfide bond" evidence="4">
    <location>
        <begin position="282"/>
        <end position="292"/>
    </location>
</feature>
<feature type="disulfide bond" evidence="3">
    <location>
        <begin position="327"/>
        <end position="352"/>
    </location>
</feature>
<feature type="disulfide bond" evidence="3">
    <location>
        <begin position="370"/>
        <end position="423"/>
    </location>
</feature>
<feature type="disulfide bond" evidence="3">
    <location>
        <begin position="382"/>
        <end position="603"/>
    </location>
</feature>
<feature type="disulfide bond" evidence="2">
    <location>
        <begin position="925"/>
        <end position="936"/>
    </location>
</feature>
<feature type="strand" evidence="5">
    <location>
        <begin position="16"/>
        <end position="18"/>
    </location>
</feature>
<feature type="strand" evidence="9">
    <location>
        <begin position="23"/>
        <end position="26"/>
    </location>
</feature>
<feature type="strand" evidence="10">
    <location>
        <begin position="43"/>
        <end position="45"/>
    </location>
</feature>
<feature type="strand" evidence="5">
    <location>
        <begin position="52"/>
        <end position="56"/>
    </location>
</feature>
<feature type="strand" evidence="5">
    <location>
        <begin position="58"/>
        <end position="68"/>
    </location>
</feature>
<feature type="strand" evidence="5">
    <location>
        <begin position="73"/>
        <end position="76"/>
    </location>
</feature>
<feature type="strand" evidence="5">
    <location>
        <begin position="80"/>
        <end position="83"/>
    </location>
</feature>
<feature type="helix" evidence="5">
    <location>
        <begin position="87"/>
        <end position="90"/>
    </location>
</feature>
<feature type="turn" evidence="5">
    <location>
        <begin position="92"/>
        <end position="94"/>
    </location>
</feature>
<feature type="strand" evidence="5">
    <location>
        <begin position="95"/>
        <end position="97"/>
    </location>
</feature>
<feature type="strand" evidence="5">
    <location>
        <begin position="99"/>
        <end position="107"/>
    </location>
</feature>
<feature type="strand" evidence="5">
    <location>
        <begin position="109"/>
        <end position="115"/>
    </location>
</feature>
<feature type="strand" evidence="5">
    <location>
        <begin position="117"/>
        <end position="120"/>
    </location>
</feature>
<feature type="strand" evidence="5">
    <location>
        <begin position="124"/>
        <end position="129"/>
    </location>
</feature>
<feature type="strand" evidence="12">
    <location>
        <begin position="132"/>
        <end position="134"/>
    </location>
</feature>
<feature type="strand" evidence="5">
    <location>
        <begin position="136"/>
        <end position="141"/>
    </location>
</feature>
<feature type="strand" evidence="5">
    <location>
        <begin position="143"/>
        <end position="151"/>
    </location>
</feature>
<feature type="strand" evidence="5">
    <location>
        <begin position="155"/>
        <end position="162"/>
    </location>
</feature>
<feature type="strand" evidence="5">
    <location>
        <begin position="164"/>
        <end position="166"/>
    </location>
</feature>
<feature type="strand" evidence="5">
    <location>
        <begin position="173"/>
        <end position="175"/>
    </location>
</feature>
<feature type="strand" evidence="5">
    <location>
        <begin position="183"/>
        <end position="190"/>
    </location>
</feature>
<feature type="strand" evidence="5">
    <location>
        <begin position="196"/>
        <end position="205"/>
    </location>
</feature>
<feature type="strand" evidence="5">
    <location>
        <begin position="208"/>
        <end position="227"/>
    </location>
</feature>
<feature type="strand" evidence="5">
    <location>
        <begin position="234"/>
        <end position="237"/>
    </location>
</feature>
<feature type="strand" evidence="12">
    <location>
        <begin position="239"/>
        <end position="241"/>
    </location>
</feature>
<feature type="turn" evidence="5">
    <location>
        <begin position="247"/>
        <end position="250"/>
    </location>
</feature>
<feature type="strand" evidence="5">
    <location>
        <begin position="256"/>
        <end position="270"/>
    </location>
</feature>
<feature type="strand" evidence="12">
    <location>
        <begin position="272"/>
        <end position="274"/>
    </location>
</feature>
<feature type="strand" evidence="5">
    <location>
        <begin position="276"/>
        <end position="281"/>
    </location>
</feature>
<feature type="turn" evidence="12">
    <location>
        <begin position="282"/>
        <end position="284"/>
    </location>
</feature>
<feature type="helix" evidence="5">
    <location>
        <begin position="286"/>
        <end position="294"/>
    </location>
</feature>
<feature type="strand" evidence="7">
    <location>
        <begin position="296"/>
        <end position="298"/>
    </location>
</feature>
<feature type="strand" evidence="5">
    <location>
        <begin position="301"/>
        <end position="305"/>
    </location>
</feature>
<feature type="strand" evidence="5">
    <location>
        <begin position="315"/>
        <end position="319"/>
    </location>
</feature>
<feature type="helix" evidence="5">
    <location>
        <begin position="329"/>
        <end position="333"/>
    </location>
</feature>
<feature type="strand" evidence="5">
    <location>
        <begin position="336"/>
        <end position="339"/>
    </location>
</feature>
<feature type="helix" evidence="6">
    <location>
        <begin position="341"/>
        <end position="343"/>
    </location>
</feature>
<feature type="strand" evidence="5">
    <location>
        <begin position="345"/>
        <end position="349"/>
    </location>
</feature>
<feature type="strand" evidence="5">
    <location>
        <begin position="351"/>
        <end position="354"/>
    </location>
</feature>
<feature type="helix" evidence="5">
    <location>
        <begin position="356"/>
        <end position="362"/>
    </location>
</feature>
<feature type="strand" evidence="5">
    <location>
        <begin position="363"/>
        <end position="373"/>
    </location>
</feature>
<feature type="helix" evidence="5">
    <location>
        <begin position="375"/>
        <end position="377"/>
    </location>
</feature>
<feature type="helix" evidence="6">
    <location>
        <begin position="378"/>
        <end position="380"/>
    </location>
</feature>
<feature type="strand" evidence="5">
    <location>
        <begin position="382"/>
        <end position="392"/>
    </location>
</feature>
<feature type="helix" evidence="5">
    <location>
        <begin position="395"/>
        <end position="401"/>
    </location>
</feature>
<feature type="strand" evidence="12">
    <location>
        <begin position="402"/>
        <end position="404"/>
    </location>
</feature>
<feature type="helix" evidence="5">
    <location>
        <begin position="408"/>
        <end position="412"/>
    </location>
</feature>
<feature type="strand" evidence="5">
    <location>
        <begin position="418"/>
        <end position="420"/>
    </location>
</feature>
<feature type="strand" evidence="5">
    <location>
        <begin position="422"/>
        <end position="431"/>
    </location>
</feature>
<feature type="strand" evidence="5">
    <location>
        <begin position="435"/>
        <end position="437"/>
    </location>
</feature>
<feature type="helix" evidence="5">
    <location>
        <begin position="443"/>
        <end position="447"/>
    </location>
</feature>
<feature type="strand" evidence="5">
    <location>
        <begin position="459"/>
        <end position="464"/>
    </location>
</feature>
<feature type="strand" evidence="5">
    <location>
        <begin position="466"/>
        <end position="468"/>
    </location>
</feature>
<feature type="strand" evidence="8">
    <location>
        <begin position="475"/>
        <end position="477"/>
    </location>
</feature>
<feature type="turn" evidence="5">
    <location>
        <begin position="479"/>
        <end position="481"/>
    </location>
</feature>
<feature type="helix" evidence="5">
    <location>
        <begin position="482"/>
        <end position="484"/>
    </location>
</feature>
<feature type="strand" evidence="5">
    <location>
        <begin position="504"/>
        <end position="507"/>
    </location>
</feature>
<feature type="strand" evidence="5">
    <location>
        <begin position="513"/>
        <end position="520"/>
    </location>
</feature>
<feature type="strand" evidence="5">
    <location>
        <begin position="524"/>
        <end position="526"/>
    </location>
</feature>
<feature type="turn" evidence="5">
    <location>
        <begin position="530"/>
        <end position="532"/>
    </location>
</feature>
<feature type="strand" evidence="5">
    <location>
        <begin position="536"/>
        <end position="538"/>
    </location>
</feature>
<feature type="helix" evidence="5">
    <location>
        <begin position="553"/>
        <end position="555"/>
    </location>
</feature>
<feature type="strand" evidence="5">
    <location>
        <begin position="556"/>
        <end position="561"/>
    </location>
</feature>
<feature type="helix" evidence="5">
    <location>
        <begin position="569"/>
        <end position="571"/>
    </location>
</feature>
<feature type="strand" evidence="5">
    <location>
        <begin position="572"/>
        <end position="579"/>
    </location>
</feature>
<feature type="strand" evidence="5">
    <location>
        <begin position="585"/>
        <end position="597"/>
    </location>
</feature>
<feature type="strand" evidence="5">
    <location>
        <begin position="599"/>
        <end position="604"/>
    </location>
</feature>
<feature type="strand" evidence="12">
    <location>
        <begin position="605"/>
        <end position="608"/>
    </location>
</feature>
<feature type="strand" evidence="5">
    <location>
        <begin position="617"/>
        <end position="624"/>
    </location>
</feature>
<feature type="strand" evidence="5">
    <location>
        <begin position="627"/>
        <end position="636"/>
    </location>
</feature>
<feature type="strand" evidence="5">
    <location>
        <begin position="647"/>
        <end position="649"/>
    </location>
</feature>
<feature type="strand" evidence="10">
    <location>
        <begin position="651"/>
        <end position="653"/>
    </location>
</feature>
<feature type="strand" evidence="5">
    <location>
        <begin position="655"/>
        <end position="659"/>
    </location>
</feature>
<feature type="turn" evidence="5">
    <location>
        <begin position="661"/>
        <end position="663"/>
    </location>
</feature>
<feature type="strand" evidence="5">
    <location>
        <begin position="666"/>
        <end position="670"/>
    </location>
</feature>
<feature type="strand" evidence="5">
    <location>
        <begin position="678"/>
        <end position="681"/>
    </location>
</feature>
<feature type="strand" evidence="5">
    <location>
        <begin position="689"/>
        <end position="693"/>
    </location>
</feature>
<feature type="helix" evidence="5">
    <location>
        <begin position="697"/>
        <end position="703"/>
    </location>
</feature>
<feature type="strand" evidence="5">
    <location>
        <begin position="712"/>
        <end position="715"/>
    </location>
</feature>
<feature type="strand" evidence="5">
    <location>
        <begin position="718"/>
        <end position="722"/>
    </location>
</feature>
<feature type="strand" evidence="5">
    <location>
        <begin position="724"/>
        <end position="732"/>
    </location>
</feature>
<feature type="strand" evidence="5">
    <location>
        <begin position="735"/>
        <end position="739"/>
    </location>
</feature>
<feature type="strand" evidence="5">
    <location>
        <begin position="742"/>
        <end position="746"/>
    </location>
</feature>
<feature type="strand" evidence="9">
    <location>
        <begin position="751"/>
        <end position="753"/>
    </location>
</feature>
<feature type="strand" evidence="5">
    <location>
        <begin position="761"/>
        <end position="767"/>
    </location>
</feature>
<feature type="strand" evidence="5">
    <location>
        <begin position="773"/>
        <end position="775"/>
    </location>
</feature>
<feature type="strand" evidence="8">
    <location>
        <begin position="782"/>
        <end position="784"/>
    </location>
</feature>
<feature type="strand" evidence="5">
    <location>
        <begin position="785"/>
        <end position="804"/>
    </location>
</feature>
<feature type="strand" evidence="5">
    <location>
        <begin position="809"/>
        <end position="812"/>
    </location>
</feature>
<feature type="helix" evidence="5">
    <location>
        <begin position="814"/>
        <end position="818"/>
    </location>
</feature>
<feature type="turn" evidence="5">
    <location>
        <begin position="819"/>
        <end position="821"/>
    </location>
</feature>
<feature type="helix" evidence="5">
    <location>
        <begin position="823"/>
        <end position="830"/>
    </location>
</feature>
<feature type="helix" evidence="5">
    <location>
        <begin position="835"/>
        <end position="862"/>
    </location>
</feature>
<feature type="strand" evidence="5">
    <location>
        <begin position="866"/>
        <end position="868"/>
    </location>
</feature>
<feature type="turn" evidence="5">
    <location>
        <begin position="873"/>
        <end position="875"/>
    </location>
</feature>
<feature type="strand" evidence="11">
    <location>
        <begin position="878"/>
        <end position="881"/>
    </location>
</feature>
<feature type="turn" evidence="5">
    <location>
        <begin position="885"/>
        <end position="887"/>
    </location>
</feature>
<feature type="strand" evidence="5">
    <location>
        <begin position="892"/>
        <end position="895"/>
    </location>
</feature>
<feature type="helix" evidence="5">
    <location>
        <begin position="902"/>
        <end position="908"/>
    </location>
</feature>
<feature type="strand" evidence="5">
    <location>
        <begin position="912"/>
        <end position="914"/>
    </location>
</feature>
<feature type="helix" evidence="5">
    <location>
        <begin position="915"/>
        <end position="922"/>
    </location>
</feature>
<feature type="turn" evidence="5">
    <location>
        <begin position="923"/>
        <end position="927"/>
    </location>
</feature>
<feature type="strand" evidence="5">
    <location>
        <begin position="929"/>
        <end position="931"/>
    </location>
</feature>
<feature type="helix" evidence="5">
    <location>
        <begin position="934"/>
        <end position="940"/>
    </location>
</feature>
<feature type="strand" evidence="5">
    <location>
        <begin position="943"/>
        <end position="946"/>
    </location>
</feature>
<feature type="helix" evidence="5">
    <location>
        <begin position="952"/>
        <end position="964"/>
    </location>
</feature>
<feature type="turn" evidence="5">
    <location>
        <begin position="965"/>
        <end position="967"/>
    </location>
</feature>
<feature type="turn" evidence="5">
    <location>
        <begin position="972"/>
        <end position="976"/>
    </location>
</feature>
<feature type="helix" evidence="5">
    <location>
        <begin position="979"/>
        <end position="988"/>
    </location>
</feature>
<feature type="turn" evidence="5">
    <location>
        <begin position="989"/>
        <end position="991"/>
    </location>
</feature>
<feature type="helix" evidence="5">
    <location>
        <begin position="994"/>
        <end position="999"/>
    </location>
</feature>
<feature type="helix" evidence="5">
    <location>
        <begin position="1001"/>
        <end position="1016"/>
    </location>
</feature>
<feature type="strand" evidence="5">
    <location>
        <begin position="1020"/>
        <end position="1022"/>
    </location>
</feature>
<feature type="helix" evidence="5">
    <location>
        <begin position="1024"/>
        <end position="1044"/>
    </location>
</feature>
<feature type="helix" evidence="5">
    <location>
        <begin position="1045"/>
        <end position="1048"/>
    </location>
</feature>
<feature type="helix" evidence="5">
    <location>
        <begin position="1058"/>
        <end position="1062"/>
    </location>
</feature>
<feature type="helix" evidence="5">
    <location>
        <begin position="1067"/>
        <end position="1113"/>
    </location>
</feature>
<feature type="strand" evidence="5">
    <location>
        <begin position="1121"/>
        <end position="1124"/>
    </location>
</feature>
<feature type="strand" evidence="5">
    <location>
        <begin position="1127"/>
        <end position="1137"/>
    </location>
</feature>
<feature type="strand" evidence="5">
    <location>
        <begin position="1140"/>
        <end position="1160"/>
    </location>
</feature>
<feature type="strand" evidence="5">
    <location>
        <begin position="1162"/>
        <end position="1164"/>
    </location>
</feature>
<feature type="turn" evidence="5">
    <location>
        <begin position="1165"/>
        <end position="1167"/>
    </location>
</feature>
<feature type="strand" evidence="5">
    <location>
        <begin position="1168"/>
        <end position="1180"/>
    </location>
</feature>
<feature type="strand" evidence="5">
    <location>
        <begin position="1183"/>
        <end position="1188"/>
    </location>
</feature>
<feature type="strand" evidence="5">
    <location>
        <begin position="1191"/>
        <end position="1195"/>
    </location>
</feature>
<feature type="turn" evidence="5">
    <location>
        <begin position="1199"/>
        <end position="1201"/>
    </location>
</feature>
<feature type="strand" evidence="5">
    <location>
        <begin position="1202"/>
        <end position="1207"/>
    </location>
</feature>
<feature type="strand" evidence="5">
    <location>
        <begin position="1212"/>
        <end position="1214"/>
    </location>
</feature>
<evidence type="ECO:0000250" key="1"/>
<evidence type="ECO:0000255" key="2">
    <source>
        <dbReference type="HAMAP-Rule" id="MF_04099"/>
    </source>
</evidence>
<evidence type="ECO:0000255" key="3">
    <source>
        <dbReference type="PROSITE-ProRule" id="PRU01269"/>
    </source>
</evidence>
<evidence type="ECO:0000255" key="4">
    <source>
        <dbReference type="PROSITE-ProRule" id="PRU01270"/>
    </source>
</evidence>
<evidence type="ECO:0007829" key="5">
    <source>
        <dbReference type="PDB" id="8Y19"/>
    </source>
</evidence>
<evidence type="ECO:0007829" key="6">
    <source>
        <dbReference type="PDB" id="8Y1A"/>
    </source>
</evidence>
<evidence type="ECO:0007829" key="7">
    <source>
        <dbReference type="PDB" id="8Y1B"/>
    </source>
</evidence>
<evidence type="ECO:0007829" key="8">
    <source>
        <dbReference type="PDB" id="8Y1C"/>
    </source>
</evidence>
<evidence type="ECO:0007829" key="9">
    <source>
        <dbReference type="PDB" id="8Y1D"/>
    </source>
</evidence>
<evidence type="ECO:0007829" key="10">
    <source>
        <dbReference type="PDB" id="8Y1E"/>
    </source>
</evidence>
<evidence type="ECO:0007829" key="11">
    <source>
        <dbReference type="PDB" id="8Y1G"/>
    </source>
</evidence>
<evidence type="ECO:0007829" key="12">
    <source>
        <dbReference type="PDB" id="8Y1H"/>
    </source>
</evidence>
<protein>
    <recommendedName>
        <fullName evidence="2">Spike glycoprotein</fullName>
        <shortName evidence="2">S glycoprotein</shortName>
    </recommendedName>
    <alternativeName>
        <fullName evidence="2">E2</fullName>
    </alternativeName>
    <alternativeName>
        <fullName evidence="2">Peplomer protein</fullName>
    </alternativeName>
    <component>
        <recommendedName>
            <fullName evidence="2">Spike protein S1</fullName>
        </recommendedName>
    </component>
    <component>
        <recommendedName>
            <fullName evidence="2">Spike protein S2</fullName>
        </recommendedName>
    </component>
    <component>
        <recommendedName>
            <fullName evidence="2">Spike protein S2'</fullName>
        </recommendedName>
    </component>
</protein>
<organismHost>
    <name type="scientific">Homo sapiens</name>
    <name type="common">Human</name>
    <dbReference type="NCBI Taxonomy" id="9606"/>
</organismHost>
<keyword id="KW-0002">3D-structure</keyword>
<keyword id="KW-0175">Coiled coil</keyword>
<keyword id="KW-1015">Disulfide bond</keyword>
<keyword id="KW-1170">Fusion of virus membrane with host endosomal membrane</keyword>
<keyword id="KW-1168">Fusion of virus membrane with host membrane</keyword>
<keyword id="KW-0325">Glycoprotein</keyword>
<keyword id="KW-1032">Host cell membrane</keyword>
<keyword id="KW-1043">Host membrane</keyword>
<keyword id="KW-0945">Host-virus interaction</keyword>
<keyword id="KW-0449">Lipoprotein</keyword>
<keyword id="KW-0472">Membrane</keyword>
<keyword id="KW-0564">Palmitate</keyword>
<keyword id="KW-0732">Signal</keyword>
<keyword id="KW-0812">Transmembrane</keyword>
<keyword id="KW-1133">Transmembrane helix</keyword>
<keyword id="KW-1161">Viral attachment to host cell</keyword>
<keyword id="KW-0261">Viral envelope protein</keyword>
<keyword id="KW-1162">Viral penetration into host cytoplasm</keyword>
<keyword id="KW-0946">Virion</keyword>
<keyword id="KW-0843">Virulence</keyword>
<keyword id="KW-1160">Virus entry into host cell</keyword>